<gene>
    <name evidence="1" type="primary">tpiA</name>
    <name type="ordered locus">EcE24377A_4453</name>
</gene>
<dbReference type="EC" id="5.3.1.1" evidence="1"/>
<dbReference type="EMBL" id="CP000800">
    <property type="protein sequence ID" value="ABV21028.1"/>
    <property type="molecule type" value="Genomic_DNA"/>
</dbReference>
<dbReference type="RefSeq" id="WP_001216325.1">
    <property type="nucleotide sequence ID" value="NC_009801.1"/>
</dbReference>
<dbReference type="SMR" id="A7ZUD3"/>
<dbReference type="GeneID" id="93777979"/>
<dbReference type="KEGG" id="ecw:EcE24377A_4453"/>
<dbReference type="HOGENOM" id="CLU_024251_2_1_6"/>
<dbReference type="UniPathway" id="UPA00109">
    <property type="reaction ID" value="UER00189"/>
</dbReference>
<dbReference type="UniPathway" id="UPA00138"/>
<dbReference type="Proteomes" id="UP000001122">
    <property type="component" value="Chromosome"/>
</dbReference>
<dbReference type="GO" id="GO:0005829">
    <property type="term" value="C:cytosol"/>
    <property type="evidence" value="ECO:0007669"/>
    <property type="project" value="TreeGrafter"/>
</dbReference>
<dbReference type="GO" id="GO:0004807">
    <property type="term" value="F:triose-phosphate isomerase activity"/>
    <property type="evidence" value="ECO:0007669"/>
    <property type="project" value="UniProtKB-UniRule"/>
</dbReference>
<dbReference type="GO" id="GO:0006094">
    <property type="term" value="P:gluconeogenesis"/>
    <property type="evidence" value="ECO:0007669"/>
    <property type="project" value="UniProtKB-UniRule"/>
</dbReference>
<dbReference type="GO" id="GO:0046166">
    <property type="term" value="P:glyceraldehyde-3-phosphate biosynthetic process"/>
    <property type="evidence" value="ECO:0007669"/>
    <property type="project" value="TreeGrafter"/>
</dbReference>
<dbReference type="GO" id="GO:0019563">
    <property type="term" value="P:glycerol catabolic process"/>
    <property type="evidence" value="ECO:0007669"/>
    <property type="project" value="TreeGrafter"/>
</dbReference>
<dbReference type="GO" id="GO:0006096">
    <property type="term" value="P:glycolytic process"/>
    <property type="evidence" value="ECO:0007669"/>
    <property type="project" value="UniProtKB-UniRule"/>
</dbReference>
<dbReference type="CDD" id="cd00311">
    <property type="entry name" value="TIM"/>
    <property type="match status" value="1"/>
</dbReference>
<dbReference type="FunFam" id="3.20.20.70:FF:000020">
    <property type="entry name" value="Triosephosphate isomerase"/>
    <property type="match status" value="1"/>
</dbReference>
<dbReference type="Gene3D" id="3.20.20.70">
    <property type="entry name" value="Aldolase class I"/>
    <property type="match status" value="1"/>
</dbReference>
<dbReference type="HAMAP" id="MF_00147_B">
    <property type="entry name" value="TIM_B"/>
    <property type="match status" value="1"/>
</dbReference>
<dbReference type="InterPro" id="IPR013785">
    <property type="entry name" value="Aldolase_TIM"/>
</dbReference>
<dbReference type="InterPro" id="IPR035990">
    <property type="entry name" value="TIM_sf"/>
</dbReference>
<dbReference type="InterPro" id="IPR022896">
    <property type="entry name" value="TrioseP_Isoase_bac/euk"/>
</dbReference>
<dbReference type="InterPro" id="IPR000652">
    <property type="entry name" value="Triosephosphate_isomerase"/>
</dbReference>
<dbReference type="InterPro" id="IPR020861">
    <property type="entry name" value="Triosephosphate_isomerase_AS"/>
</dbReference>
<dbReference type="NCBIfam" id="TIGR00419">
    <property type="entry name" value="tim"/>
    <property type="match status" value="1"/>
</dbReference>
<dbReference type="PANTHER" id="PTHR21139">
    <property type="entry name" value="TRIOSEPHOSPHATE ISOMERASE"/>
    <property type="match status" value="1"/>
</dbReference>
<dbReference type="PANTHER" id="PTHR21139:SF42">
    <property type="entry name" value="TRIOSEPHOSPHATE ISOMERASE"/>
    <property type="match status" value="1"/>
</dbReference>
<dbReference type="Pfam" id="PF00121">
    <property type="entry name" value="TIM"/>
    <property type="match status" value="1"/>
</dbReference>
<dbReference type="SUPFAM" id="SSF51351">
    <property type="entry name" value="Triosephosphate isomerase (TIM)"/>
    <property type="match status" value="1"/>
</dbReference>
<dbReference type="PROSITE" id="PS00171">
    <property type="entry name" value="TIM_1"/>
    <property type="match status" value="1"/>
</dbReference>
<dbReference type="PROSITE" id="PS51440">
    <property type="entry name" value="TIM_2"/>
    <property type="match status" value="1"/>
</dbReference>
<sequence>MRHPLVMGNWKLNGSRHMVHELVSNLRKELAGVAGCAVAIAPPEMYIDMAKREAEGSHIMLGAQNVDLNLSGAFTGETSAAMLKDIGAQYIIIGHSERRTYHKESDELIAKKFAVLKEQGLTPVLCIGETEAENEAGKTEEVCARQIDAVLKTQGAAAFEGAVIAYEPVWAIGTGKSATPAQAQAVHKFIRDHIAKVDANIAEQVIIQYGGSVNASNAAELFAQPDIDGALVGGASLKADAFAVIVKAAEAAKQA</sequence>
<keyword id="KW-0963">Cytoplasm</keyword>
<keyword id="KW-0312">Gluconeogenesis</keyword>
<keyword id="KW-0324">Glycolysis</keyword>
<keyword id="KW-0413">Isomerase</keyword>
<keyword id="KW-1185">Reference proteome</keyword>
<protein>
    <recommendedName>
        <fullName evidence="1">Triosephosphate isomerase</fullName>
        <shortName evidence="1">TIM</shortName>
        <shortName evidence="1">TPI</shortName>
        <ecNumber evidence="1">5.3.1.1</ecNumber>
    </recommendedName>
    <alternativeName>
        <fullName evidence="1">Triose-phosphate isomerase</fullName>
    </alternativeName>
</protein>
<proteinExistence type="inferred from homology"/>
<evidence type="ECO:0000255" key="1">
    <source>
        <dbReference type="HAMAP-Rule" id="MF_00147"/>
    </source>
</evidence>
<accession>A7ZUD3</accession>
<feature type="chain" id="PRO_1000058109" description="Triosephosphate isomerase">
    <location>
        <begin position="1"/>
        <end position="255"/>
    </location>
</feature>
<feature type="active site" description="Electrophile" evidence="1">
    <location>
        <position position="95"/>
    </location>
</feature>
<feature type="active site" description="Proton acceptor" evidence="1">
    <location>
        <position position="167"/>
    </location>
</feature>
<feature type="binding site" evidence="1">
    <location>
        <begin position="9"/>
        <end position="11"/>
    </location>
    <ligand>
        <name>substrate</name>
    </ligand>
</feature>
<feature type="binding site" evidence="1">
    <location>
        <position position="173"/>
    </location>
    <ligand>
        <name>substrate</name>
    </ligand>
</feature>
<feature type="binding site" evidence="1">
    <location>
        <position position="212"/>
    </location>
    <ligand>
        <name>substrate</name>
    </ligand>
</feature>
<feature type="binding site" evidence="1">
    <location>
        <begin position="233"/>
        <end position="234"/>
    </location>
    <ligand>
        <name>substrate</name>
    </ligand>
</feature>
<name>TPIS_ECO24</name>
<organism>
    <name type="scientific">Escherichia coli O139:H28 (strain E24377A / ETEC)</name>
    <dbReference type="NCBI Taxonomy" id="331111"/>
    <lineage>
        <taxon>Bacteria</taxon>
        <taxon>Pseudomonadati</taxon>
        <taxon>Pseudomonadota</taxon>
        <taxon>Gammaproteobacteria</taxon>
        <taxon>Enterobacterales</taxon>
        <taxon>Enterobacteriaceae</taxon>
        <taxon>Escherichia</taxon>
    </lineage>
</organism>
<reference key="1">
    <citation type="journal article" date="2008" name="J. Bacteriol.">
        <title>The pangenome structure of Escherichia coli: comparative genomic analysis of E. coli commensal and pathogenic isolates.</title>
        <authorList>
            <person name="Rasko D.A."/>
            <person name="Rosovitz M.J."/>
            <person name="Myers G.S.A."/>
            <person name="Mongodin E.F."/>
            <person name="Fricke W.F."/>
            <person name="Gajer P."/>
            <person name="Crabtree J."/>
            <person name="Sebaihia M."/>
            <person name="Thomson N.R."/>
            <person name="Chaudhuri R."/>
            <person name="Henderson I.R."/>
            <person name="Sperandio V."/>
            <person name="Ravel J."/>
        </authorList>
    </citation>
    <scope>NUCLEOTIDE SEQUENCE [LARGE SCALE GENOMIC DNA]</scope>
    <source>
        <strain>E24377A / ETEC</strain>
    </source>
</reference>
<comment type="function">
    <text evidence="1">Involved in the gluconeogenesis. Catalyzes stereospecifically the conversion of dihydroxyacetone phosphate (DHAP) to D-glyceraldehyde-3-phosphate (G3P).</text>
</comment>
<comment type="catalytic activity">
    <reaction evidence="1">
        <text>D-glyceraldehyde 3-phosphate = dihydroxyacetone phosphate</text>
        <dbReference type="Rhea" id="RHEA:18585"/>
        <dbReference type="ChEBI" id="CHEBI:57642"/>
        <dbReference type="ChEBI" id="CHEBI:59776"/>
        <dbReference type="EC" id="5.3.1.1"/>
    </reaction>
</comment>
<comment type="pathway">
    <text evidence="1">Carbohydrate biosynthesis; gluconeogenesis.</text>
</comment>
<comment type="pathway">
    <text evidence="1">Carbohydrate degradation; glycolysis; D-glyceraldehyde 3-phosphate from glycerone phosphate: step 1/1.</text>
</comment>
<comment type="subunit">
    <text evidence="1">Homodimer.</text>
</comment>
<comment type="subcellular location">
    <subcellularLocation>
        <location evidence="1">Cytoplasm</location>
    </subcellularLocation>
</comment>
<comment type="similarity">
    <text evidence="1">Belongs to the triosephosphate isomerase family.</text>
</comment>